<evidence type="ECO:0000255" key="1">
    <source>
        <dbReference type="HAMAP-Rule" id="MF_00258"/>
    </source>
</evidence>
<comment type="function">
    <text evidence="1">Provides the (R)-glutamate required for cell wall biosynthesis.</text>
</comment>
<comment type="catalytic activity">
    <reaction evidence="1">
        <text>L-glutamate = D-glutamate</text>
        <dbReference type="Rhea" id="RHEA:12813"/>
        <dbReference type="ChEBI" id="CHEBI:29985"/>
        <dbReference type="ChEBI" id="CHEBI:29986"/>
        <dbReference type="EC" id="5.1.1.3"/>
    </reaction>
</comment>
<comment type="pathway">
    <text evidence="1">Cell wall biogenesis; peptidoglycan biosynthesis.</text>
</comment>
<comment type="similarity">
    <text evidence="1">Belongs to the aspartate/glutamate racemases family.</text>
</comment>
<feature type="chain" id="PRO_1000204631" description="Glutamate racemase">
    <location>
        <begin position="1"/>
        <end position="268"/>
    </location>
</feature>
<feature type="active site" description="Proton donor/acceptor" evidence="1">
    <location>
        <position position="78"/>
    </location>
</feature>
<feature type="active site" description="Proton donor/acceptor" evidence="1">
    <location>
        <position position="192"/>
    </location>
</feature>
<feature type="binding site" evidence="1">
    <location>
        <begin position="14"/>
        <end position="15"/>
    </location>
    <ligand>
        <name>substrate</name>
    </ligand>
</feature>
<feature type="binding site" evidence="1">
    <location>
        <begin position="46"/>
        <end position="47"/>
    </location>
    <ligand>
        <name>substrate</name>
    </ligand>
</feature>
<feature type="binding site" evidence="1">
    <location>
        <begin position="79"/>
        <end position="80"/>
    </location>
    <ligand>
        <name>substrate</name>
    </ligand>
</feature>
<feature type="binding site" evidence="1">
    <location>
        <begin position="193"/>
        <end position="194"/>
    </location>
    <ligand>
        <name>substrate</name>
    </ligand>
</feature>
<name>MURI_SPHAL</name>
<keyword id="KW-0133">Cell shape</keyword>
<keyword id="KW-0961">Cell wall biogenesis/degradation</keyword>
<keyword id="KW-0413">Isomerase</keyword>
<keyword id="KW-0573">Peptidoglycan synthesis</keyword>
<keyword id="KW-1185">Reference proteome</keyword>
<protein>
    <recommendedName>
        <fullName evidence="1">Glutamate racemase</fullName>
        <ecNumber evidence="1">5.1.1.3</ecNumber>
    </recommendedName>
</protein>
<gene>
    <name evidence="1" type="primary">murI</name>
    <name type="ordered locus">Sala_1207</name>
</gene>
<organism>
    <name type="scientific">Sphingopyxis alaskensis (strain DSM 13593 / LMG 18877 / RB2256)</name>
    <name type="common">Sphingomonas alaskensis</name>
    <dbReference type="NCBI Taxonomy" id="317655"/>
    <lineage>
        <taxon>Bacteria</taxon>
        <taxon>Pseudomonadati</taxon>
        <taxon>Pseudomonadota</taxon>
        <taxon>Alphaproteobacteria</taxon>
        <taxon>Sphingomonadales</taxon>
        <taxon>Sphingomonadaceae</taxon>
        <taxon>Sphingopyxis</taxon>
    </lineage>
</organism>
<sequence>MHPPAPDAPILFFDSGLGGLSVLGPTRALLPTAPIVYAADYAGLPYGRKSNEELAARVPALLGRLVERYQPRLAVIACNTASTIALGHVRAALDLPIVGTVPAIKPAAEMTKSGVIGVLGTEATVRQPYVDDLSARFAGGKTVLRHGSPGLVTGAEARLRGETVDPEVIARAVAGLRDQPRGDAIDVVVLACTHFPLLKDELQAGFGRGVALIDGAEGIARRIAHLTDGQAWPAIAVPGIAVFTRSDERPPPPLAVLAPYGIGSIETV</sequence>
<proteinExistence type="inferred from homology"/>
<accession>Q1GTU9</accession>
<reference key="1">
    <citation type="journal article" date="2009" name="Proc. Natl. Acad. Sci. U.S.A.">
        <title>The genomic basis of trophic strategy in marine bacteria.</title>
        <authorList>
            <person name="Lauro F.M."/>
            <person name="McDougald D."/>
            <person name="Thomas T."/>
            <person name="Williams T.J."/>
            <person name="Egan S."/>
            <person name="Rice S."/>
            <person name="DeMaere M.Z."/>
            <person name="Ting L."/>
            <person name="Ertan H."/>
            <person name="Johnson J."/>
            <person name="Ferriera S."/>
            <person name="Lapidus A."/>
            <person name="Anderson I."/>
            <person name="Kyrpides N."/>
            <person name="Munk A.C."/>
            <person name="Detter C."/>
            <person name="Han C.S."/>
            <person name="Brown M.V."/>
            <person name="Robb F.T."/>
            <person name="Kjelleberg S."/>
            <person name="Cavicchioli R."/>
        </authorList>
    </citation>
    <scope>NUCLEOTIDE SEQUENCE [LARGE SCALE GENOMIC DNA]</scope>
    <source>
        <strain>DSM 13593 / LMG 18877 / RB2256</strain>
    </source>
</reference>
<dbReference type="EC" id="5.1.1.3" evidence="1"/>
<dbReference type="EMBL" id="CP000356">
    <property type="protein sequence ID" value="ABF52923.1"/>
    <property type="molecule type" value="Genomic_DNA"/>
</dbReference>
<dbReference type="RefSeq" id="WP_011541508.1">
    <property type="nucleotide sequence ID" value="NC_008048.1"/>
</dbReference>
<dbReference type="SMR" id="Q1GTU9"/>
<dbReference type="STRING" id="317655.Sala_1207"/>
<dbReference type="KEGG" id="sal:Sala_1207"/>
<dbReference type="eggNOG" id="COG0796">
    <property type="taxonomic scope" value="Bacteria"/>
</dbReference>
<dbReference type="HOGENOM" id="CLU_052344_2_0_5"/>
<dbReference type="OrthoDB" id="9801055at2"/>
<dbReference type="UniPathway" id="UPA00219"/>
<dbReference type="Proteomes" id="UP000006578">
    <property type="component" value="Chromosome"/>
</dbReference>
<dbReference type="GO" id="GO:0008881">
    <property type="term" value="F:glutamate racemase activity"/>
    <property type="evidence" value="ECO:0007669"/>
    <property type="project" value="UniProtKB-UniRule"/>
</dbReference>
<dbReference type="GO" id="GO:0071555">
    <property type="term" value="P:cell wall organization"/>
    <property type="evidence" value="ECO:0007669"/>
    <property type="project" value="UniProtKB-KW"/>
</dbReference>
<dbReference type="GO" id="GO:0009252">
    <property type="term" value="P:peptidoglycan biosynthetic process"/>
    <property type="evidence" value="ECO:0007669"/>
    <property type="project" value="UniProtKB-UniRule"/>
</dbReference>
<dbReference type="GO" id="GO:0008360">
    <property type="term" value="P:regulation of cell shape"/>
    <property type="evidence" value="ECO:0007669"/>
    <property type="project" value="UniProtKB-KW"/>
</dbReference>
<dbReference type="Gene3D" id="3.40.50.1860">
    <property type="match status" value="2"/>
</dbReference>
<dbReference type="HAMAP" id="MF_00258">
    <property type="entry name" value="Glu_racemase"/>
    <property type="match status" value="1"/>
</dbReference>
<dbReference type="InterPro" id="IPR015942">
    <property type="entry name" value="Asp/Glu/hydantoin_racemase"/>
</dbReference>
<dbReference type="InterPro" id="IPR001920">
    <property type="entry name" value="Asp/Glu_race"/>
</dbReference>
<dbReference type="InterPro" id="IPR018187">
    <property type="entry name" value="Asp/Glu_racemase_AS_1"/>
</dbReference>
<dbReference type="InterPro" id="IPR033134">
    <property type="entry name" value="Asp/Glu_racemase_AS_2"/>
</dbReference>
<dbReference type="InterPro" id="IPR004391">
    <property type="entry name" value="Glu_race"/>
</dbReference>
<dbReference type="NCBIfam" id="TIGR00067">
    <property type="entry name" value="glut_race"/>
    <property type="match status" value="1"/>
</dbReference>
<dbReference type="PANTHER" id="PTHR21198">
    <property type="entry name" value="GLUTAMATE RACEMASE"/>
    <property type="match status" value="1"/>
</dbReference>
<dbReference type="PANTHER" id="PTHR21198:SF2">
    <property type="entry name" value="GLUTAMATE RACEMASE"/>
    <property type="match status" value="1"/>
</dbReference>
<dbReference type="Pfam" id="PF01177">
    <property type="entry name" value="Asp_Glu_race"/>
    <property type="match status" value="1"/>
</dbReference>
<dbReference type="SUPFAM" id="SSF53681">
    <property type="entry name" value="Aspartate/glutamate racemase"/>
    <property type="match status" value="2"/>
</dbReference>
<dbReference type="PROSITE" id="PS00923">
    <property type="entry name" value="ASP_GLU_RACEMASE_1"/>
    <property type="match status" value="1"/>
</dbReference>
<dbReference type="PROSITE" id="PS00924">
    <property type="entry name" value="ASP_GLU_RACEMASE_2"/>
    <property type="match status" value="1"/>
</dbReference>